<reference key="1">
    <citation type="submission" date="2004-11" db="EMBL/GenBank/DDBJ databases">
        <authorList>
            <consortium name="The German cDNA consortium"/>
        </authorList>
    </citation>
    <scope>NUCLEOTIDE SEQUENCE [LARGE SCALE MRNA]</scope>
    <source>
        <tissue>Brain cortex</tissue>
    </source>
</reference>
<sequence>MTEFWLISAPGEKTCQQTWEKLHAATSKNNNLAVTSKFNIPDLKVGTLDVLVGLSDELAKLDAFVEGVVKKVAQYMADVLEDSKDKVQENLLANGVDLVTYITRFQWDMAKYPIKQSLKNISEIIAKGVTQIDNDLKSRASAYNNLKGNLQNLERKNAGSLLTRSLAEIVKKDDFVLDSEYLVTLLVVVPKLNHNDWIKQYETLAEMVVPRSSNVLSEDQDSYLCNVTLFRKAVDDFRHKARENKFIVRDFQYNEEEMKADKEEMNRLSTDKKKQFGPLVRWLKVNFSEAFIAWIHVKALRVFVESVLRYGLPVNFQAMLLQPNKKTLKKLREVLHELYKHLDSSAAAIIDAPMDIPGLNLSQQEYYPYVYYKIDCNLLEFK</sequence>
<evidence type="ECO:0000250" key="1">
    <source>
        <dbReference type="UniProtKB" id="P21282"/>
    </source>
</evidence>
<evidence type="ECO:0000250" key="2">
    <source>
        <dbReference type="UniProtKB" id="P21283"/>
    </source>
</evidence>
<evidence type="ECO:0000250" key="3">
    <source>
        <dbReference type="UniProtKB" id="P31412"/>
    </source>
</evidence>
<evidence type="ECO:0000250" key="4">
    <source>
        <dbReference type="UniProtKB" id="Q5FVI6"/>
    </source>
</evidence>
<evidence type="ECO:0000305" key="5"/>
<proteinExistence type="evidence at transcript level"/>
<gene>
    <name type="primary">ATP6V1C1</name>
</gene>
<keyword id="KW-0007">Acetylation</keyword>
<keyword id="KW-0968">Cytoplasmic vesicle</keyword>
<keyword id="KW-0375">Hydrogen ion transport</keyword>
<keyword id="KW-0406">Ion transport</keyword>
<keyword id="KW-0472">Membrane</keyword>
<keyword id="KW-1185">Reference proteome</keyword>
<keyword id="KW-0770">Synapse</keyword>
<keyword id="KW-0813">Transport</keyword>
<dbReference type="EMBL" id="CR857846">
    <property type="protein sequence ID" value="CAH90100.1"/>
    <property type="molecule type" value="mRNA"/>
</dbReference>
<dbReference type="EMBL" id="CR861092">
    <property type="protein sequence ID" value="CAH93171.1"/>
    <property type="molecule type" value="mRNA"/>
</dbReference>
<dbReference type="EMBL" id="CR861298">
    <property type="protein sequence ID" value="CAH93365.1"/>
    <property type="molecule type" value="mRNA"/>
</dbReference>
<dbReference type="RefSeq" id="NP_001125006.1">
    <property type="nucleotide sequence ID" value="NM_001131534.1"/>
</dbReference>
<dbReference type="RefSeq" id="XP_024106287.1">
    <property type="nucleotide sequence ID" value="XM_024250519.3"/>
</dbReference>
<dbReference type="RefSeq" id="XP_054416818.1">
    <property type="nucleotide sequence ID" value="XM_054560843.2"/>
</dbReference>
<dbReference type="RefSeq" id="XP_054416819.1">
    <property type="nucleotide sequence ID" value="XM_054560844.2"/>
</dbReference>
<dbReference type="SMR" id="Q5RDQ7"/>
<dbReference type="FunCoup" id="Q5RDQ7">
    <property type="interactions" value="2163"/>
</dbReference>
<dbReference type="STRING" id="9601.ENSPPYP00000021093"/>
<dbReference type="Ensembl" id="ENSPPYT00000021936.3">
    <property type="protein sequence ID" value="ENSPPYP00000021093.3"/>
    <property type="gene ID" value="ENSPPYG00000018803.3"/>
</dbReference>
<dbReference type="GeneID" id="100171885"/>
<dbReference type="KEGG" id="pon:100171885"/>
<dbReference type="CTD" id="528"/>
<dbReference type="eggNOG" id="KOG2909">
    <property type="taxonomic scope" value="Eukaryota"/>
</dbReference>
<dbReference type="GeneTree" id="ENSGT00390000004263"/>
<dbReference type="InParanoid" id="Q5RDQ7"/>
<dbReference type="OMA" id="VMIWIHV"/>
<dbReference type="OrthoDB" id="6605928at2759"/>
<dbReference type="Proteomes" id="UP000001595">
    <property type="component" value="Chromosome 8"/>
</dbReference>
<dbReference type="GO" id="GO:0030665">
    <property type="term" value="C:clathrin-coated vesicle membrane"/>
    <property type="evidence" value="ECO:0007669"/>
    <property type="project" value="UniProtKB-SubCell"/>
</dbReference>
<dbReference type="GO" id="GO:0005765">
    <property type="term" value="C:lysosomal membrane"/>
    <property type="evidence" value="ECO:0007669"/>
    <property type="project" value="TreeGrafter"/>
</dbReference>
<dbReference type="GO" id="GO:0005886">
    <property type="term" value="C:plasma membrane"/>
    <property type="evidence" value="ECO:0000250"/>
    <property type="project" value="UniProtKB"/>
</dbReference>
<dbReference type="GO" id="GO:0030672">
    <property type="term" value="C:synaptic vesicle membrane"/>
    <property type="evidence" value="ECO:0007669"/>
    <property type="project" value="UniProtKB-SubCell"/>
</dbReference>
<dbReference type="GO" id="GO:0000221">
    <property type="term" value="C:vacuolar proton-transporting V-type ATPase, V1 domain"/>
    <property type="evidence" value="ECO:0000250"/>
    <property type="project" value="UniProtKB"/>
</dbReference>
<dbReference type="GO" id="GO:0046961">
    <property type="term" value="F:proton-transporting ATPase activity, rotational mechanism"/>
    <property type="evidence" value="ECO:0007669"/>
    <property type="project" value="Ensembl"/>
</dbReference>
<dbReference type="GO" id="GO:0097401">
    <property type="term" value="P:synaptic vesicle lumen acidification"/>
    <property type="evidence" value="ECO:0007669"/>
    <property type="project" value="Ensembl"/>
</dbReference>
<dbReference type="CDD" id="cd14785">
    <property type="entry name" value="V-ATPase_C"/>
    <property type="match status" value="1"/>
</dbReference>
<dbReference type="FunFam" id="1.20.1460.10:FF:000004">
    <property type="entry name" value="V-type proton ATPase subunit C"/>
    <property type="match status" value="1"/>
</dbReference>
<dbReference type="FunFam" id="3.30.70.100:FF:000002">
    <property type="entry name" value="V-type proton ATPase subunit C"/>
    <property type="match status" value="1"/>
</dbReference>
<dbReference type="FunFam" id="3.30.70.1180:FF:000003">
    <property type="entry name" value="V-type proton ATPase subunit C"/>
    <property type="match status" value="1"/>
</dbReference>
<dbReference type="Gene3D" id="3.30.70.100">
    <property type="match status" value="1"/>
</dbReference>
<dbReference type="Gene3D" id="1.20.1460.10">
    <property type="entry name" value="subunit c (vma5p) of the yeast v-atpase, domain 2"/>
    <property type="match status" value="1"/>
</dbReference>
<dbReference type="Gene3D" id="3.30.70.1180">
    <property type="entry name" value="Vacuolar atp synthase subunit c, domain 1"/>
    <property type="match status" value="1"/>
</dbReference>
<dbReference type="InterPro" id="IPR004907">
    <property type="entry name" value="ATPase_V1-cplx_csu"/>
</dbReference>
<dbReference type="InterPro" id="IPR036132">
    <property type="entry name" value="Vac_ATP_synth_c_sf"/>
</dbReference>
<dbReference type="PANTHER" id="PTHR10137">
    <property type="entry name" value="V-TYPE PROTON ATPASE SUBUNIT C"/>
    <property type="match status" value="1"/>
</dbReference>
<dbReference type="PANTHER" id="PTHR10137:SF5">
    <property type="entry name" value="V-TYPE PROTON ATPASE SUBUNIT C 1"/>
    <property type="match status" value="1"/>
</dbReference>
<dbReference type="Pfam" id="PF03223">
    <property type="entry name" value="V-ATPase_C"/>
    <property type="match status" value="1"/>
</dbReference>
<dbReference type="SUPFAM" id="SSF118203">
    <property type="entry name" value="Vacuolar ATP synthase subunit C"/>
    <property type="match status" value="1"/>
</dbReference>
<comment type="function">
    <text evidence="1 2 3">Subunit of the V1 complex of vacuolar(H+)-ATPase (V-ATPase), a multisubunit enzyme composed of a peripheral complex (V1) that hydrolyzes ATP and a membrane integral complex (V0) that translocates protons (By similarity). V-ATPase is responsible for acidifying and maintaining the pH of intracellular compartments and in some cell types, is targeted to the plasma membrane, where it is responsible for acidifying the extracellular environment (By similarity). Subunit C is necessary for the assembly of the catalytic sector of the enzyme and is likely to have a specific function in its catalytic activity (By similarity).</text>
</comment>
<comment type="subunit">
    <text evidence="2">V-ATPase is a heteromultimeric enzyme made up of two complexes: the ATP-hydrolytic V1 complex and the proton translocation V0 complex (By similarity). The V1 complex consists of three catalytic AB heterodimers that form a heterohexamer, three peripheral stalks each consisting of EG heterodimers, one central rotor including subunits D and F, and the regulatory subunits C and H (By similarity). The proton translocation complex V0 consists of the proton transport subunit a, a ring of proteolipid subunits c9c'', rotary subunit d, subunits e and f, and the accessory subunits ATP6AP1/Ac45 and ATP6AP2/PRR (By similarity).</text>
</comment>
<comment type="subcellular location">
    <subcellularLocation>
        <location evidence="4">Cytoplasmic vesicle</location>
        <location evidence="4">Secretory vesicle</location>
        <location evidence="4">Synaptic vesicle membrane</location>
        <topology evidence="5">Peripheral membrane protein</topology>
    </subcellularLocation>
    <subcellularLocation>
        <location evidence="4">Cytoplasmic vesicle</location>
        <location evidence="4">Clathrin-coated vesicle membrane</location>
        <topology evidence="5">Peripheral membrane protein</topology>
    </subcellularLocation>
</comment>
<comment type="similarity">
    <text evidence="5">Belongs to the V-ATPase C subunit family.</text>
</comment>
<protein>
    <recommendedName>
        <fullName>V-type proton ATPase subunit C 1</fullName>
        <shortName>V-ATPase subunit C 1</shortName>
    </recommendedName>
    <alternativeName>
        <fullName>Vacuolar proton pump subunit C 1</fullName>
    </alternativeName>
</protein>
<feature type="initiator methionine" description="Removed" evidence="2">
    <location>
        <position position="1"/>
    </location>
</feature>
<feature type="chain" id="PRO_0000307373" description="V-type proton ATPase subunit C 1">
    <location>
        <begin position="2"/>
        <end position="382"/>
    </location>
</feature>
<feature type="modified residue" description="N-acetylthreonine" evidence="2">
    <location>
        <position position="2"/>
    </location>
</feature>
<feature type="sequence conflict" description="In Ref. 1; CAH93365." evidence="5" ref="1">
    <original>M</original>
    <variation>R</variation>
    <location>
        <position position="207"/>
    </location>
</feature>
<feature type="sequence conflict" description="In Ref. 1; CAH93171." evidence="5" ref="1">
    <original>L</original>
    <variation>S</variation>
    <location>
        <position position="312"/>
    </location>
</feature>
<organism>
    <name type="scientific">Pongo abelii</name>
    <name type="common">Sumatran orangutan</name>
    <name type="synonym">Pongo pygmaeus abelii</name>
    <dbReference type="NCBI Taxonomy" id="9601"/>
    <lineage>
        <taxon>Eukaryota</taxon>
        <taxon>Metazoa</taxon>
        <taxon>Chordata</taxon>
        <taxon>Craniata</taxon>
        <taxon>Vertebrata</taxon>
        <taxon>Euteleostomi</taxon>
        <taxon>Mammalia</taxon>
        <taxon>Eutheria</taxon>
        <taxon>Euarchontoglires</taxon>
        <taxon>Primates</taxon>
        <taxon>Haplorrhini</taxon>
        <taxon>Catarrhini</taxon>
        <taxon>Hominidae</taxon>
        <taxon>Pongo</taxon>
    </lineage>
</organism>
<name>VATC1_PONAB</name>
<accession>Q5RDQ7</accession>
<accession>Q5R4F1</accession>
<accession>Q5R4Z5</accession>